<evidence type="ECO:0000255" key="1">
    <source>
        <dbReference type="HAMAP-Rule" id="MF_01901"/>
    </source>
</evidence>
<protein>
    <recommendedName>
        <fullName evidence="1">Arginine exporter protein ArgO</fullName>
    </recommendedName>
</protein>
<reference key="1">
    <citation type="journal article" date="2004" name="Proc. Natl. Acad. Sci. U.S.A.">
        <title>Genome sequence of the enterobacterial phytopathogen Erwinia carotovora subsp. atroseptica and characterization of virulence factors.</title>
        <authorList>
            <person name="Bell K.S."/>
            <person name="Sebaihia M."/>
            <person name="Pritchard L."/>
            <person name="Holden M.T.G."/>
            <person name="Hyman L.J."/>
            <person name="Holeva M.C."/>
            <person name="Thomson N.R."/>
            <person name="Bentley S.D."/>
            <person name="Churcher L.J.C."/>
            <person name="Mungall K."/>
            <person name="Atkin R."/>
            <person name="Bason N."/>
            <person name="Brooks K."/>
            <person name="Chillingworth T."/>
            <person name="Clark K."/>
            <person name="Doggett J."/>
            <person name="Fraser A."/>
            <person name="Hance Z."/>
            <person name="Hauser H."/>
            <person name="Jagels K."/>
            <person name="Moule S."/>
            <person name="Norbertczak H."/>
            <person name="Ormond D."/>
            <person name="Price C."/>
            <person name="Quail M.A."/>
            <person name="Sanders M."/>
            <person name="Walker D."/>
            <person name="Whitehead S."/>
            <person name="Salmond G.P.C."/>
            <person name="Birch P.R.J."/>
            <person name="Parkhill J."/>
            <person name="Toth I.K."/>
        </authorList>
    </citation>
    <scope>NUCLEOTIDE SEQUENCE [LARGE SCALE GENOMIC DNA]</scope>
    <source>
        <strain>SCRI 1043 / ATCC BAA-672</strain>
    </source>
</reference>
<comment type="function">
    <text evidence="1">Involved in the export of arginine. Important to control the intracellular level of arginine and the correct balance between arginine and lysine.</text>
</comment>
<comment type="catalytic activity">
    <reaction evidence="1">
        <text>L-arginine(in) = L-arginine(out)</text>
        <dbReference type="Rhea" id="RHEA:32143"/>
        <dbReference type="ChEBI" id="CHEBI:32682"/>
    </reaction>
    <physiologicalReaction direction="left-to-right" evidence="1">
        <dbReference type="Rhea" id="RHEA:32144"/>
    </physiologicalReaction>
</comment>
<comment type="subcellular location">
    <subcellularLocation>
        <location evidence="1">Cell inner membrane</location>
        <topology evidence="1">Multi-pass membrane protein</topology>
    </subcellularLocation>
</comment>
<comment type="similarity">
    <text evidence="1">Belongs to the LysE/ArgO transporter (TC 2.A.75) family.</text>
</comment>
<keyword id="KW-0029">Amino-acid transport</keyword>
<keyword id="KW-0997">Cell inner membrane</keyword>
<keyword id="KW-1003">Cell membrane</keyword>
<keyword id="KW-0472">Membrane</keyword>
<keyword id="KW-1185">Reference proteome</keyword>
<keyword id="KW-0812">Transmembrane</keyword>
<keyword id="KW-1133">Transmembrane helix</keyword>
<keyword id="KW-0813">Transport</keyword>
<sequence length="204" mass="22475">MWAVYLQGVLLGAAMILPLGPQNAFVMNQGIRRQYHLMVALLCAVSDMVLISAGIFGGSALLNQSSLLLGAVTCGGVAFLLWFGWGAMKTAFSKNIALTSADVMKQSRWRIIATMLAVTWLNPHVYLDTFVVLGSLGSQFADDARRWFALGTMTASFTWFFALALLAAWLAPWLNTPRVQRVINFFVGMVMWGIALQLARHGWQ</sequence>
<feature type="chain" id="PRO_0000204161" description="Arginine exporter protein ArgO">
    <location>
        <begin position="1"/>
        <end position="204"/>
    </location>
</feature>
<feature type="transmembrane region" description="Helical" evidence="1">
    <location>
        <begin position="1"/>
        <end position="21"/>
    </location>
</feature>
<feature type="transmembrane region" description="Helical" evidence="1">
    <location>
        <begin position="37"/>
        <end position="57"/>
    </location>
</feature>
<feature type="transmembrane region" description="Helical" evidence="1">
    <location>
        <begin position="67"/>
        <end position="87"/>
    </location>
</feature>
<feature type="transmembrane region" description="Helical" evidence="1">
    <location>
        <begin position="111"/>
        <end position="131"/>
    </location>
</feature>
<feature type="transmembrane region" description="Helical" evidence="1">
    <location>
        <begin position="154"/>
        <end position="174"/>
    </location>
</feature>
<feature type="transmembrane region" description="Helical" evidence="1">
    <location>
        <begin position="179"/>
        <end position="199"/>
    </location>
</feature>
<proteinExistence type="inferred from homology"/>
<accession>Q6D090</accession>
<name>ARGO_PECAS</name>
<gene>
    <name evidence="1" type="primary">argO</name>
    <name type="ordered locus">ECA3909</name>
</gene>
<organism>
    <name type="scientific">Pectobacterium atrosepticum (strain SCRI 1043 / ATCC BAA-672)</name>
    <name type="common">Erwinia carotovora subsp. atroseptica</name>
    <dbReference type="NCBI Taxonomy" id="218491"/>
    <lineage>
        <taxon>Bacteria</taxon>
        <taxon>Pseudomonadati</taxon>
        <taxon>Pseudomonadota</taxon>
        <taxon>Gammaproteobacteria</taxon>
        <taxon>Enterobacterales</taxon>
        <taxon>Pectobacteriaceae</taxon>
        <taxon>Pectobacterium</taxon>
    </lineage>
</organism>
<dbReference type="EMBL" id="BX950851">
    <property type="protein sequence ID" value="CAG76807.1"/>
    <property type="molecule type" value="Genomic_DNA"/>
</dbReference>
<dbReference type="RefSeq" id="WP_011095406.1">
    <property type="nucleotide sequence ID" value="NC_004547.2"/>
</dbReference>
<dbReference type="STRING" id="218491.ECA3909"/>
<dbReference type="KEGG" id="eca:ECA3909"/>
<dbReference type="PATRIC" id="fig|218491.5.peg.3972"/>
<dbReference type="eggNOG" id="COG1279">
    <property type="taxonomic scope" value="Bacteria"/>
</dbReference>
<dbReference type="HOGENOM" id="CLU_087840_0_1_6"/>
<dbReference type="OrthoDB" id="5638726at2"/>
<dbReference type="Proteomes" id="UP000007966">
    <property type="component" value="Chromosome"/>
</dbReference>
<dbReference type="GO" id="GO:0005886">
    <property type="term" value="C:plasma membrane"/>
    <property type="evidence" value="ECO:0007669"/>
    <property type="project" value="UniProtKB-SubCell"/>
</dbReference>
<dbReference type="GO" id="GO:0061459">
    <property type="term" value="F:L-arginine transmembrane transporter activity"/>
    <property type="evidence" value="ECO:0007669"/>
    <property type="project" value="UniProtKB-UniRule"/>
</dbReference>
<dbReference type="HAMAP" id="MF_01901">
    <property type="entry name" value="ArgO"/>
    <property type="match status" value="1"/>
</dbReference>
<dbReference type="InterPro" id="IPR023445">
    <property type="entry name" value="Arg_export_ArgO_enterobac"/>
</dbReference>
<dbReference type="InterPro" id="IPR001123">
    <property type="entry name" value="LeuE-type"/>
</dbReference>
<dbReference type="InterPro" id="IPR004777">
    <property type="entry name" value="Lys/arg_exporter"/>
</dbReference>
<dbReference type="NCBIfam" id="TIGR00948">
    <property type="entry name" value="2a75"/>
    <property type="match status" value="1"/>
</dbReference>
<dbReference type="NCBIfam" id="NF006801">
    <property type="entry name" value="PRK09304.1"/>
    <property type="match status" value="1"/>
</dbReference>
<dbReference type="PANTHER" id="PTHR30086">
    <property type="entry name" value="ARGININE EXPORTER PROTEIN ARGO"/>
    <property type="match status" value="1"/>
</dbReference>
<dbReference type="PANTHER" id="PTHR30086:SF20">
    <property type="entry name" value="ARGININE EXPORTER PROTEIN ARGO-RELATED"/>
    <property type="match status" value="1"/>
</dbReference>
<dbReference type="Pfam" id="PF01810">
    <property type="entry name" value="LysE"/>
    <property type="match status" value="1"/>
</dbReference>